<organism>
    <name type="scientific">Parasynechococcus marenigrum (strain WH8102)</name>
    <dbReference type="NCBI Taxonomy" id="84588"/>
    <lineage>
        <taxon>Bacteria</taxon>
        <taxon>Bacillati</taxon>
        <taxon>Cyanobacteriota</taxon>
        <taxon>Cyanophyceae</taxon>
        <taxon>Synechococcales</taxon>
        <taxon>Prochlorococcaceae</taxon>
        <taxon>Parasynechococcus</taxon>
        <taxon>Parasynechococcus marenigrum</taxon>
    </lineage>
</organism>
<protein>
    <recommendedName>
        <fullName evidence="1">Small ribosomal subunit protein uS8</fullName>
    </recommendedName>
    <alternativeName>
        <fullName evidence="2">30S ribosomal protein S8</fullName>
    </alternativeName>
</protein>
<keyword id="KW-0687">Ribonucleoprotein</keyword>
<keyword id="KW-0689">Ribosomal protein</keyword>
<keyword id="KW-0694">RNA-binding</keyword>
<keyword id="KW-0699">rRNA-binding</keyword>
<accession>Q7U4I7</accession>
<sequence>MANHDPISDMLTRIRNASEKRHETTKIPASRMTRSIAKVLQQEGFISEISEQGEGVRTELVLSLKYSGKHRLPTIRSMQRVSKPGLRIYKNTRGLPKVLGGLGVAIISTSKGVMSDRDARREGVGGEVLCYVY</sequence>
<comment type="function">
    <text evidence="1">One of the primary rRNA binding proteins, it binds directly to 16S rRNA central domain where it helps coordinate assembly of the platform of the 30S subunit.</text>
</comment>
<comment type="subunit">
    <text evidence="1">Part of the 30S ribosomal subunit. Contacts proteins S5 and S12.</text>
</comment>
<comment type="similarity">
    <text evidence="1">Belongs to the universal ribosomal protein uS8 family.</text>
</comment>
<gene>
    <name evidence="1" type="primary">rpsH</name>
    <name evidence="1" type="synonym">rps8</name>
    <name type="ordered locus">SYNW2080</name>
</gene>
<dbReference type="EMBL" id="BX569694">
    <property type="protein sequence ID" value="CAE08595.1"/>
    <property type="molecule type" value="Genomic_DNA"/>
</dbReference>
<dbReference type="RefSeq" id="WP_011128938.1">
    <property type="nucleotide sequence ID" value="NC_005070.1"/>
</dbReference>
<dbReference type="SMR" id="Q7U4I7"/>
<dbReference type="STRING" id="84588.SYNW2080"/>
<dbReference type="KEGG" id="syw:SYNW2080"/>
<dbReference type="eggNOG" id="COG0096">
    <property type="taxonomic scope" value="Bacteria"/>
</dbReference>
<dbReference type="HOGENOM" id="CLU_098428_0_2_3"/>
<dbReference type="Proteomes" id="UP000001422">
    <property type="component" value="Chromosome"/>
</dbReference>
<dbReference type="GO" id="GO:1990904">
    <property type="term" value="C:ribonucleoprotein complex"/>
    <property type="evidence" value="ECO:0007669"/>
    <property type="project" value="UniProtKB-KW"/>
</dbReference>
<dbReference type="GO" id="GO:0005840">
    <property type="term" value="C:ribosome"/>
    <property type="evidence" value="ECO:0007669"/>
    <property type="project" value="UniProtKB-KW"/>
</dbReference>
<dbReference type="GO" id="GO:0019843">
    <property type="term" value="F:rRNA binding"/>
    <property type="evidence" value="ECO:0007669"/>
    <property type="project" value="UniProtKB-UniRule"/>
</dbReference>
<dbReference type="GO" id="GO:0003735">
    <property type="term" value="F:structural constituent of ribosome"/>
    <property type="evidence" value="ECO:0007669"/>
    <property type="project" value="InterPro"/>
</dbReference>
<dbReference type="GO" id="GO:0006412">
    <property type="term" value="P:translation"/>
    <property type="evidence" value="ECO:0007669"/>
    <property type="project" value="UniProtKB-UniRule"/>
</dbReference>
<dbReference type="FunFam" id="3.30.1370.30:FF:000002">
    <property type="entry name" value="30S ribosomal protein S8"/>
    <property type="match status" value="1"/>
</dbReference>
<dbReference type="FunFam" id="3.30.1490.10:FF:000001">
    <property type="entry name" value="30S ribosomal protein S8"/>
    <property type="match status" value="1"/>
</dbReference>
<dbReference type="Gene3D" id="3.30.1370.30">
    <property type="match status" value="1"/>
</dbReference>
<dbReference type="Gene3D" id="3.30.1490.10">
    <property type="match status" value="1"/>
</dbReference>
<dbReference type="HAMAP" id="MF_01302_B">
    <property type="entry name" value="Ribosomal_uS8_B"/>
    <property type="match status" value="1"/>
</dbReference>
<dbReference type="InterPro" id="IPR000630">
    <property type="entry name" value="Ribosomal_uS8"/>
</dbReference>
<dbReference type="InterPro" id="IPR047863">
    <property type="entry name" value="Ribosomal_uS8_CS"/>
</dbReference>
<dbReference type="InterPro" id="IPR035987">
    <property type="entry name" value="Ribosomal_uS8_sf"/>
</dbReference>
<dbReference type="NCBIfam" id="NF001109">
    <property type="entry name" value="PRK00136.1"/>
    <property type="match status" value="1"/>
</dbReference>
<dbReference type="PANTHER" id="PTHR11758">
    <property type="entry name" value="40S RIBOSOMAL PROTEIN S15A"/>
    <property type="match status" value="1"/>
</dbReference>
<dbReference type="Pfam" id="PF00410">
    <property type="entry name" value="Ribosomal_S8"/>
    <property type="match status" value="1"/>
</dbReference>
<dbReference type="SUPFAM" id="SSF56047">
    <property type="entry name" value="Ribosomal protein S8"/>
    <property type="match status" value="1"/>
</dbReference>
<dbReference type="PROSITE" id="PS00053">
    <property type="entry name" value="RIBOSOMAL_S8"/>
    <property type="match status" value="1"/>
</dbReference>
<reference key="1">
    <citation type="journal article" date="2003" name="Nature">
        <title>The genome of a motile marine Synechococcus.</title>
        <authorList>
            <person name="Palenik B."/>
            <person name="Brahamsha B."/>
            <person name="Larimer F.W."/>
            <person name="Land M.L."/>
            <person name="Hauser L."/>
            <person name="Chain P."/>
            <person name="Lamerdin J.E."/>
            <person name="Regala W."/>
            <person name="Allen E.E."/>
            <person name="McCarren J."/>
            <person name="Paulsen I.T."/>
            <person name="Dufresne A."/>
            <person name="Partensky F."/>
            <person name="Webb E.A."/>
            <person name="Waterbury J."/>
        </authorList>
    </citation>
    <scope>NUCLEOTIDE SEQUENCE [LARGE SCALE GENOMIC DNA]</scope>
    <source>
        <strain>WH8102</strain>
    </source>
</reference>
<feature type="chain" id="PRO_0000126507" description="Small ribosomal subunit protein uS8">
    <location>
        <begin position="1"/>
        <end position="133"/>
    </location>
</feature>
<name>RS8_PARMW</name>
<evidence type="ECO:0000255" key="1">
    <source>
        <dbReference type="HAMAP-Rule" id="MF_01302"/>
    </source>
</evidence>
<evidence type="ECO:0000305" key="2"/>
<proteinExistence type="inferred from homology"/>